<gene>
    <name evidence="1" type="primary">bioW</name>
    <name type="ordered locus">SYO3AOP1_1703</name>
</gene>
<accession>B2V6W9</accession>
<reference key="1">
    <citation type="journal article" date="2009" name="J. Bacteriol.">
        <title>Complete and draft genome sequences of six members of the Aquificales.</title>
        <authorList>
            <person name="Reysenbach A.-L."/>
            <person name="Hamamura N."/>
            <person name="Podar M."/>
            <person name="Griffiths E."/>
            <person name="Ferreira S."/>
            <person name="Hochstein R."/>
            <person name="Heidelberg J."/>
            <person name="Johnson J."/>
            <person name="Mead D."/>
            <person name="Pohorille A."/>
            <person name="Sarmiento M."/>
            <person name="Schweighofer K."/>
            <person name="Seshadri R."/>
            <person name="Voytek M.A."/>
        </authorList>
    </citation>
    <scope>NUCLEOTIDE SEQUENCE [LARGE SCALE GENOMIC DNA]</scope>
    <source>
        <strain>YO3AOP1</strain>
    </source>
</reference>
<protein>
    <recommendedName>
        <fullName evidence="1">6-carboxyhexanoate--CoA ligase</fullName>
        <ecNumber evidence="1">6.2.1.14</ecNumber>
    </recommendedName>
    <alternativeName>
        <fullName evidence="1">Pimeloyl-CoA synthase</fullName>
    </alternativeName>
</protein>
<feature type="chain" id="PRO_0000412090" description="6-carboxyhexanoate--CoA ligase">
    <location>
        <begin position="1"/>
        <end position="245"/>
    </location>
</feature>
<keyword id="KW-0067">ATP-binding</keyword>
<keyword id="KW-0093">Biotin biosynthesis</keyword>
<keyword id="KW-0436">Ligase</keyword>
<keyword id="KW-0460">Magnesium</keyword>
<keyword id="KW-0547">Nucleotide-binding</keyword>
<evidence type="ECO:0000255" key="1">
    <source>
        <dbReference type="HAMAP-Rule" id="MF_00668"/>
    </source>
</evidence>
<comment type="function">
    <text evidence="1">Catalyzes the transformation of pimelate into pimeloyl-CoA with concomitant hydrolysis of ATP to AMP.</text>
</comment>
<comment type="catalytic activity">
    <reaction evidence="1">
        <text>heptanedioate + ATP + CoA = 6-carboxyhexanoyl-CoA + AMP + diphosphate</text>
        <dbReference type="Rhea" id="RHEA:14781"/>
        <dbReference type="ChEBI" id="CHEBI:30616"/>
        <dbReference type="ChEBI" id="CHEBI:33019"/>
        <dbReference type="ChEBI" id="CHEBI:36165"/>
        <dbReference type="ChEBI" id="CHEBI:57287"/>
        <dbReference type="ChEBI" id="CHEBI:57360"/>
        <dbReference type="ChEBI" id="CHEBI:456215"/>
        <dbReference type="EC" id="6.2.1.14"/>
    </reaction>
</comment>
<comment type="cofactor">
    <cofactor evidence="1">
        <name>Mg(2+)</name>
        <dbReference type="ChEBI" id="CHEBI:18420"/>
    </cofactor>
</comment>
<comment type="pathway">
    <text evidence="1">Metabolic intermediate metabolism; pimeloyl-CoA biosynthesis; pimeloyl-CoA from pimelate: step 1/1.</text>
</comment>
<comment type="subunit">
    <text evidence="1">Homodimer.</text>
</comment>
<comment type="similarity">
    <text evidence="1">Belongs to the BioW family.</text>
</comment>
<organism>
    <name type="scientific">Sulfurihydrogenibium sp. (strain YO3AOP1)</name>
    <dbReference type="NCBI Taxonomy" id="436114"/>
    <lineage>
        <taxon>Bacteria</taxon>
        <taxon>Pseudomonadati</taxon>
        <taxon>Aquificota</taxon>
        <taxon>Aquificia</taxon>
        <taxon>Aquificales</taxon>
        <taxon>Hydrogenothermaceae</taxon>
        <taxon>Sulfurihydrogenibium</taxon>
    </lineage>
</organism>
<dbReference type="EC" id="6.2.1.14" evidence="1"/>
<dbReference type="EMBL" id="CP001080">
    <property type="protein sequence ID" value="ACD67301.1"/>
    <property type="molecule type" value="Genomic_DNA"/>
</dbReference>
<dbReference type="RefSeq" id="WP_012460357.1">
    <property type="nucleotide sequence ID" value="NC_010730.1"/>
</dbReference>
<dbReference type="SMR" id="B2V6W9"/>
<dbReference type="STRING" id="436114.SYO3AOP1_1703"/>
<dbReference type="KEGG" id="sul:SYO3AOP1_1703"/>
<dbReference type="eggNOG" id="COG1424">
    <property type="taxonomic scope" value="Bacteria"/>
</dbReference>
<dbReference type="HOGENOM" id="CLU_076858_0_0_0"/>
<dbReference type="UniPathway" id="UPA00999">
    <property type="reaction ID" value="UER00351"/>
</dbReference>
<dbReference type="GO" id="GO:0042410">
    <property type="term" value="F:6-carboxyhexanoate-CoA ligase activity"/>
    <property type="evidence" value="ECO:0007669"/>
    <property type="project" value="UniProtKB-UniRule"/>
</dbReference>
<dbReference type="GO" id="GO:0005524">
    <property type="term" value="F:ATP binding"/>
    <property type="evidence" value="ECO:0007669"/>
    <property type="project" value="UniProtKB-KW"/>
</dbReference>
<dbReference type="GO" id="GO:0000287">
    <property type="term" value="F:magnesium ion binding"/>
    <property type="evidence" value="ECO:0007669"/>
    <property type="project" value="UniProtKB-UniRule"/>
</dbReference>
<dbReference type="GO" id="GO:0009102">
    <property type="term" value="P:biotin biosynthetic process"/>
    <property type="evidence" value="ECO:0007669"/>
    <property type="project" value="UniProtKB-UniRule"/>
</dbReference>
<dbReference type="HAMAP" id="MF_00668">
    <property type="entry name" value="BioW"/>
    <property type="match status" value="1"/>
</dbReference>
<dbReference type="InterPro" id="IPR005499">
    <property type="entry name" value="BioW"/>
</dbReference>
<dbReference type="NCBIfam" id="TIGR01204">
    <property type="entry name" value="bioW"/>
    <property type="match status" value="1"/>
</dbReference>
<dbReference type="NCBIfam" id="NF002360">
    <property type="entry name" value="PRK01322.1"/>
    <property type="match status" value="1"/>
</dbReference>
<dbReference type="Pfam" id="PF03744">
    <property type="entry name" value="BioW"/>
    <property type="match status" value="1"/>
</dbReference>
<proteinExistence type="inferred from homology"/>
<name>BIOW_SULSY</name>
<sequence length="245" mass="28502">MKFYSVKMRASLNDRHVSGGERITTEESIQKVVSELLTRPKEFDFVNIKIEKINNIKFIEKSLDIKTINVKNHKEGNEIALKLLEEVGIDREIAKAYIDLLHTGANPDRENMRGAMIITRSGKRVEKDRYRGVRTTNVDFLHREEVKKILLEKKYTERTLDALALSTKNLNHLDIIAEYCISDQPDYTTGYVAVNNTYYRINPLKEYSNPKGGRIYFVKDDTDIEELYKYLQEESFLIKEVGSLE</sequence>